<sequence>MAKYIMAFDQGTTSSRAIIFDRSGKIIASLNQEFKQIYPKAGWVEHDPMEIWGTQIGVAKGVIEKAGINPEDIAAIGITNQRETTVVWDKNTGKPIYNAIVWQCRRTAPICDELKNKGFDKKIREKTGLVVDAYFSGTKIKWILDNVEGAREKAEKGELLFGNIDTWLIWNLTRGKVHVTDYSNASRTMIFNIHELKWDKEILAELNIPEQMLPEVKPSSYVYGYTDKSIFGVEIPIAGDAGDQQAALFGQACFKPGMAKNTYGTGCFMLMNTGEKAVPSNTGLLTTIAWGIDGKVEYALEGSIFIAGAAIQWLRDELRIIDNSPQSEEYAMKVEDTNGVYVVPAFVGLGAPYWDMYARGTIVGLTRGAKREHIIRATLESIAYQTRDVLEAMQEDSGIRLQALKVDGGASANNFLMQFQSDILGVPVDRPQVIETTALGASYLAGLAVGFWNSREEIEKNWNVDKHFEPAMDNEKREKLYKGWKKAVERAMKWAEE</sequence>
<organism>
    <name type="scientific">Thermoanaerobacter pseudethanolicus (strain ATCC 33223 / 39E)</name>
    <name type="common">Clostridium thermohydrosulfuricum</name>
    <dbReference type="NCBI Taxonomy" id="340099"/>
    <lineage>
        <taxon>Bacteria</taxon>
        <taxon>Bacillati</taxon>
        <taxon>Bacillota</taxon>
        <taxon>Clostridia</taxon>
        <taxon>Thermoanaerobacterales</taxon>
        <taxon>Thermoanaerobacteraceae</taxon>
        <taxon>Thermoanaerobacter</taxon>
    </lineage>
</organism>
<reference key="1">
    <citation type="submission" date="2008-01" db="EMBL/GenBank/DDBJ databases">
        <title>Complete sequence of Thermoanaerobacter pseudethanolicus 39E.</title>
        <authorList>
            <person name="Copeland A."/>
            <person name="Lucas S."/>
            <person name="Lapidus A."/>
            <person name="Barry K."/>
            <person name="Glavina del Rio T."/>
            <person name="Dalin E."/>
            <person name="Tice H."/>
            <person name="Pitluck S."/>
            <person name="Bruce D."/>
            <person name="Goodwin L."/>
            <person name="Saunders E."/>
            <person name="Brettin T."/>
            <person name="Detter J.C."/>
            <person name="Han C."/>
            <person name="Schmutz J."/>
            <person name="Larimer F."/>
            <person name="Land M."/>
            <person name="Hauser L."/>
            <person name="Kyrpides N."/>
            <person name="Lykidis A."/>
            <person name="Hemme C."/>
            <person name="Fields M.W."/>
            <person name="He Z."/>
            <person name="Zhou J."/>
            <person name="Richardson P."/>
        </authorList>
    </citation>
    <scope>NUCLEOTIDE SEQUENCE [LARGE SCALE GENOMIC DNA]</scope>
    <source>
        <strain>ATCC 33223 / DSM 2355 / 39E</strain>
    </source>
</reference>
<feature type="chain" id="PRO_1000098769" description="Glycerol kinase">
    <location>
        <begin position="1"/>
        <end position="497"/>
    </location>
</feature>
<feature type="binding site" evidence="1">
    <location>
        <position position="12"/>
    </location>
    <ligand>
        <name>ADP</name>
        <dbReference type="ChEBI" id="CHEBI:456216"/>
    </ligand>
</feature>
<feature type="binding site" evidence="1">
    <location>
        <position position="12"/>
    </location>
    <ligand>
        <name>ATP</name>
        <dbReference type="ChEBI" id="CHEBI:30616"/>
    </ligand>
</feature>
<feature type="binding site" evidence="1">
    <location>
        <position position="12"/>
    </location>
    <ligand>
        <name>sn-glycerol 3-phosphate</name>
        <dbReference type="ChEBI" id="CHEBI:57597"/>
    </ligand>
</feature>
<feature type="binding site" evidence="1">
    <location>
        <position position="13"/>
    </location>
    <ligand>
        <name>ATP</name>
        <dbReference type="ChEBI" id="CHEBI:30616"/>
    </ligand>
</feature>
<feature type="binding site" evidence="1">
    <location>
        <position position="14"/>
    </location>
    <ligand>
        <name>ATP</name>
        <dbReference type="ChEBI" id="CHEBI:30616"/>
    </ligand>
</feature>
<feature type="binding site" evidence="1">
    <location>
        <position position="16"/>
    </location>
    <ligand>
        <name>ADP</name>
        <dbReference type="ChEBI" id="CHEBI:456216"/>
    </ligand>
</feature>
<feature type="binding site" evidence="1">
    <location>
        <position position="82"/>
    </location>
    <ligand>
        <name>glycerol</name>
        <dbReference type="ChEBI" id="CHEBI:17754"/>
    </ligand>
</feature>
<feature type="binding site" evidence="1">
    <location>
        <position position="82"/>
    </location>
    <ligand>
        <name>sn-glycerol 3-phosphate</name>
        <dbReference type="ChEBI" id="CHEBI:57597"/>
    </ligand>
</feature>
<feature type="binding site" evidence="1">
    <location>
        <position position="83"/>
    </location>
    <ligand>
        <name>glycerol</name>
        <dbReference type="ChEBI" id="CHEBI:17754"/>
    </ligand>
</feature>
<feature type="binding site" evidence="1">
    <location>
        <position position="83"/>
    </location>
    <ligand>
        <name>sn-glycerol 3-phosphate</name>
        <dbReference type="ChEBI" id="CHEBI:57597"/>
    </ligand>
</feature>
<feature type="binding site" evidence="1">
    <location>
        <position position="134"/>
    </location>
    <ligand>
        <name>glycerol</name>
        <dbReference type="ChEBI" id="CHEBI:17754"/>
    </ligand>
</feature>
<feature type="binding site" evidence="1">
    <location>
        <position position="134"/>
    </location>
    <ligand>
        <name>sn-glycerol 3-phosphate</name>
        <dbReference type="ChEBI" id="CHEBI:57597"/>
    </ligand>
</feature>
<feature type="binding site" evidence="1">
    <location>
        <position position="243"/>
    </location>
    <ligand>
        <name>glycerol</name>
        <dbReference type="ChEBI" id="CHEBI:17754"/>
    </ligand>
</feature>
<feature type="binding site" evidence="1">
    <location>
        <position position="243"/>
    </location>
    <ligand>
        <name>sn-glycerol 3-phosphate</name>
        <dbReference type="ChEBI" id="CHEBI:57597"/>
    </ligand>
</feature>
<feature type="binding site" evidence="1">
    <location>
        <position position="244"/>
    </location>
    <ligand>
        <name>glycerol</name>
        <dbReference type="ChEBI" id="CHEBI:17754"/>
    </ligand>
</feature>
<feature type="binding site" evidence="1">
    <location>
        <position position="265"/>
    </location>
    <ligand>
        <name>ADP</name>
        <dbReference type="ChEBI" id="CHEBI:456216"/>
    </ligand>
</feature>
<feature type="binding site" evidence="1">
    <location>
        <position position="265"/>
    </location>
    <ligand>
        <name>ATP</name>
        <dbReference type="ChEBI" id="CHEBI:30616"/>
    </ligand>
</feature>
<feature type="binding site" evidence="1">
    <location>
        <position position="308"/>
    </location>
    <ligand>
        <name>ADP</name>
        <dbReference type="ChEBI" id="CHEBI:456216"/>
    </ligand>
</feature>
<feature type="binding site" evidence="1">
    <location>
        <position position="308"/>
    </location>
    <ligand>
        <name>ATP</name>
        <dbReference type="ChEBI" id="CHEBI:30616"/>
    </ligand>
</feature>
<feature type="binding site" evidence="1">
    <location>
        <position position="312"/>
    </location>
    <ligand>
        <name>ATP</name>
        <dbReference type="ChEBI" id="CHEBI:30616"/>
    </ligand>
</feature>
<feature type="binding site" evidence="1">
    <location>
        <position position="409"/>
    </location>
    <ligand>
        <name>ADP</name>
        <dbReference type="ChEBI" id="CHEBI:456216"/>
    </ligand>
</feature>
<feature type="binding site" evidence="1">
    <location>
        <position position="409"/>
    </location>
    <ligand>
        <name>ATP</name>
        <dbReference type="ChEBI" id="CHEBI:30616"/>
    </ligand>
</feature>
<feature type="binding site" evidence="1">
    <location>
        <position position="413"/>
    </location>
    <ligand>
        <name>ADP</name>
        <dbReference type="ChEBI" id="CHEBI:456216"/>
    </ligand>
</feature>
<dbReference type="EC" id="2.7.1.30" evidence="1"/>
<dbReference type="EMBL" id="CP000924">
    <property type="protein sequence ID" value="ABY94201.1"/>
    <property type="molecule type" value="Genomic_DNA"/>
</dbReference>
<dbReference type="RefSeq" id="WP_012269054.1">
    <property type="nucleotide sequence ID" value="NC_010321.1"/>
</dbReference>
<dbReference type="SMR" id="B0K754"/>
<dbReference type="STRING" id="340099.Teth39_0536"/>
<dbReference type="KEGG" id="tpd:Teth39_0536"/>
<dbReference type="eggNOG" id="COG0554">
    <property type="taxonomic scope" value="Bacteria"/>
</dbReference>
<dbReference type="HOGENOM" id="CLU_009281_2_3_9"/>
<dbReference type="UniPathway" id="UPA00618">
    <property type="reaction ID" value="UER00672"/>
</dbReference>
<dbReference type="Proteomes" id="UP000002156">
    <property type="component" value="Chromosome"/>
</dbReference>
<dbReference type="GO" id="GO:0005829">
    <property type="term" value="C:cytosol"/>
    <property type="evidence" value="ECO:0007669"/>
    <property type="project" value="TreeGrafter"/>
</dbReference>
<dbReference type="GO" id="GO:0005524">
    <property type="term" value="F:ATP binding"/>
    <property type="evidence" value="ECO:0007669"/>
    <property type="project" value="UniProtKB-UniRule"/>
</dbReference>
<dbReference type="GO" id="GO:0004370">
    <property type="term" value="F:glycerol kinase activity"/>
    <property type="evidence" value="ECO:0000250"/>
    <property type="project" value="UniProtKB"/>
</dbReference>
<dbReference type="GO" id="GO:0019563">
    <property type="term" value="P:glycerol catabolic process"/>
    <property type="evidence" value="ECO:0007669"/>
    <property type="project" value="UniProtKB-UniRule"/>
</dbReference>
<dbReference type="GO" id="GO:0006071">
    <property type="term" value="P:glycerol metabolic process"/>
    <property type="evidence" value="ECO:0000250"/>
    <property type="project" value="UniProtKB"/>
</dbReference>
<dbReference type="GO" id="GO:0006072">
    <property type="term" value="P:glycerol-3-phosphate metabolic process"/>
    <property type="evidence" value="ECO:0007669"/>
    <property type="project" value="InterPro"/>
</dbReference>
<dbReference type="CDD" id="cd07769">
    <property type="entry name" value="ASKHA_NBD_FGGY_GK"/>
    <property type="match status" value="1"/>
</dbReference>
<dbReference type="FunFam" id="3.30.420.40:FF:000007">
    <property type="entry name" value="Glycerol kinase"/>
    <property type="match status" value="1"/>
</dbReference>
<dbReference type="FunFam" id="3.30.420.40:FF:000008">
    <property type="entry name" value="Glycerol kinase"/>
    <property type="match status" value="1"/>
</dbReference>
<dbReference type="Gene3D" id="3.30.420.40">
    <property type="match status" value="2"/>
</dbReference>
<dbReference type="HAMAP" id="MF_00186">
    <property type="entry name" value="Glycerol_kin"/>
    <property type="match status" value="1"/>
</dbReference>
<dbReference type="InterPro" id="IPR043129">
    <property type="entry name" value="ATPase_NBD"/>
</dbReference>
<dbReference type="InterPro" id="IPR000577">
    <property type="entry name" value="Carb_kinase_FGGY"/>
</dbReference>
<dbReference type="InterPro" id="IPR018483">
    <property type="entry name" value="Carb_kinase_FGGY_CS"/>
</dbReference>
<dbReference type="InterPro" id="IPR018485">
    <property type="entry name" value="FGGY_C"/>
</dbReference>
<dbReference type="InterPro" id="IPR018484">
    <property type="entry name" value="FGGY_N"/>
</dbReference>
<dbReference type="InterPro" id="IPR005999">
    <property type="entry name" value="Glycerol_kin"/>
</dbReference>
<dbReference type="NCBIfam" id="TIGR01311">
    <property type="entry name" value="glycerol_kin"/>
    <property type="match status" value="1"/>
</dbReference>
<dbReference type="NCBIfam" id="NF000756">
    <property type="entry name" value="PRK00047.1"/>
    <property type="match status" value="1"/>
</dbReference>
<dbReference type="PANTHER" id="PTHR10196:SF69">
    <property type="entry name" value="GLYCEROL KINASE"/>
    <property type="match status" value="1"/>
</dbReference>
<dbReference type="PANTHER" id="PTHR10196">
    <property type="entry name" value="SUGAR KINASE"/>
    <property type="match status" value="1"/>
</dbReference>
<dbReference type="Pfam" id="PF02782">
    <property type="entry name" value="FGGY_C"/>
    <property type="match status" value="1"/>
</dbReference>
<dbReference type="Pfam" id="PF00370">
    <property type="entry name" value="FGGY_N"/>
    <property type="match status" value="1"/>
</dbReference>
<dbReference type="PIRSF" id="PIRSF000538">
    <property type="entry name" value="GlpK"/>
    <property type="match status" value="1"/>
</dbReference>
<dbReference type="SUPFAM" id="SSF53067">
    <property type="entry name" value="Actin-like ATPase domain"/>
    <property type="match status" value="2"/>
</dbReference>
<dbReference type="PROSITE" id="PS00933">
    <property type="entry name" value="FGGY_KINASES_1"/>
    <property type="match status" value="1"/>
</dbReference>
<dbReference type="PROSITE" id="PS00445">
    <property type="entry name" value="FGGY_KINASES_2"/>
    <property type="match status" value="1"/>
</dbReference>
<comment type="function">
    <text evidence="1">Key enzyme in the regulation of glycerol uptake and metabolism. Catalyzes the phosphorylation of glycerol to yield sn-glycerol 3-phosphate.</text>
</comment>
<comment type="catalytic activity">
    <reaction evidence="1">
        <text>glycerol + ATP = sn-glycerol 3-phosphate + ADP + H(+)</text>
        <dbReference type="Rhea" id="RHEA:21644"/>
        <dbReference type="ChEBI" id="CHEBI:15378"/>
        <dbReference type="ChEBI" id="CHEBI:17754"/>
        <dbReference type="ChEBI" id="CHEBI:30616"/>
        <dbReference type="ChEBI" id="CHEBI:57597"/>
        <dbReference type="ChEBI" id="CHEBI:456216"/>
        <dbReference type="EC" id="2.7.1.30"/>
    </reaction>
</comment>
<comment type="activity regulation">
    <text evidence="1">Activated by phosphorylation and inhibited by fructose 1,6-bisphosphate (FBP).</text>
</comment>
<comment type="pathway">
    <text evidence="1">Polyol metabolism; glycerol degradation via glycerol kinase pathway; sn-glycerol 3-phosphate from glycerol: step 1/1.</text>
</comment>
<comment type="subunit">
    <text evidence="1">Homotetramer and homodimer (in equilibrium).</text>
</comment>
<comment type="similarity">
    <text evidence="1">Belongs to the FGGY kinase family.</text>
</comment>
<keyword id="KW-0067">ATP-binding</keyword>
<keyword id="KW-0319">Glycerol metabolism</keyword>
<keyword id="KW-0418">Kinase</keyword>
<keyword id="KW-0547">Nucleotide-binding</keyword>
<keyword id="KW-1185">Reference proteome</keyword>
<keyword id="KW-0808">Transferase</keyword>
<evidence type="ECO:0000255" key="1">
    <source>
        <dbReference type="HAMAP-Rule" id="MF_00186"/>
    </source>
</evidence>
<gene>
    <name evidence="1" type="primary">glpK</name>
    <name type="ordered locus">Teth39_0536</name>
</gene>
<proteinExistence type="inferred from homology"/>
<name>GLPK_THEP3</name>
<accession>B0K754</accession>
<protein>
    <recommendedName>
        <fullName evidence="1">Glycerol kinase</fullName>
        <ecNumber evidence="1">2.7.1.30</ecNumber>
    </recommendedName>
    <alternativeName>
        <fullName evidence="1">ATP:glycerol 3-phosphotransferase</fullName>
    </alternativeName>
    <alternativeName>
        <fullName evidence="1">Glycerokinase</fullName>
        <shortName evidence="1">GK</shortName>
    </alternativeName>
</protein>